<gene>
    <name type="ordered locus">TC_0583</name>
</gene>
<feature type="chain" id="PRO_0000218354" description="Uncharacterized protein TC_0583">
    <location>
        <begin position="1"/>
        <end position="266"/>
    </location>
</feature>
<accession>Q9PK84</accession>
<dbReference type="EMBL" id="AE002160">
    <property type="protein sequence ID" value="AAF39417.1"/>
    <property type="molecule type" value="Genomic_DNA"/>
</dbReference>
<dbReference type="PIR" id="F81687">
    <property type="entry name" value="F81687"/>
</dbReference>
<dbReference type="RefSeq" id="WP_010230901.1">
    <property type="nucleotide sequence ID" value="NZ_CP063055.1"/>
</dbReference>
<dbReference type="GeneID" id="1245942"/>
<dbReference type="KEGG" id="cmu:TC_0583"/>
<dbReference type="eggNOG" id="ENOG502ZC7E">
    <property type="taxonomic scope" value="Bacteria"/>
</dbReference>
<dbReference type="HOGENOM" id="CLU_091270_0_0_0"/>
<dbReference type="OrthoDB" id="17717at2"/>
<dbReference type="Proteomes" id="UP000000800">
    <property type="component" value="Chromosome"/>
</dbReference>
<dbReference type="InterPro" id="IPR024492">
    <property type="entry name" value="DUF2764"/>
</dbReference>
<dbReference type="Pfam" id="PF10962">
    <property type="entry name" value="DUF2764"/>
    <property type="match status" value="1"/>
</dbReference>
<protein>
    <recommendedName>
        <fullName>Uncharacterized protein TC_0583</fullName>
    </recommendedName>
</protein>
<comment type="similarity">
    <text evidence="1">Belongs to the chlamydial CPn_0087/CT3_09/TC_0583 family.</text>
</comment>
<evidence type="ECO:0000305" key="1"/>
<proteinExistence type="inferred from homology"/>
<name>Y583_CHLMU</name>
<organism>
    <name type="scientific">Chlamydia muridarum (strain MoPn / Nigg)</name>
    <dbReference type="NCBI Taxonomy" id="243161"/>
    <lineage>
        <taxon>Bacteria</taxon>
        <taxon>Pseudomonadati</taxon>
        <taxon>Chlamydiota</taxon>
        <taxon>Chlamydiia</taxon>
        <taxon>Chlamydiales</taxon>
        <taxon>Chlamydiaceae</taxon>
        <taxon>Chlamydia/Chlamydophila group</taxon>
        <taxon>Chlamydia</taxon>
    </lineage>
</organism>
<reference key="1">
    <citation type="journal article" date="2000" name="Nucleic Acids Res.">
        <title>Genome sequences of Chlamydia trachomatis MoPn and Chlamydia pneumoniae AR39.</title>
        <authorList>
            <person name="Read T.D."/>
            <person name="Brunham R.C."/>
            <person name="Shen C."/>
            <person name="Gill S.R."/>
            <person name="Heidelberg J.F."/>
            <person name="White O."/>
            <person name="Hickey E.K."/>
            <person name="Peterson J.D."/>
            <person name="Utterback T.R."/>
            <person name="Berry K.J."/>
            <person name="Bass S."/>
            <person name="Linher K.D."/>
            <person name="Weidman J.F."/>
            <person name="Khouri H.M."/>
            <person name="Craven B."/>
            <person name="Bowman C."/>
            <person name="Dodson R.J."/>
            <person name="Gwinn M.L."/>
            <person name="Nelson W.C."/>
            <person name="DeBoy R.T."/>
            <person name="Kolonay J.F."/>
            <person name="McClarty G."/>
            <person name="Salzberg S.L."/>
            <person name="Eisen J.A."/>
            <person name="Fraser C.M."/>
        </authorList>
    </citation>
    <scope>NUCLEOTIDE SEQUENCE [LARGE SCALE GENOMIC DNA]</scope>
    <source>
        <strain>MoPn / Nigg</strain>
    </source>
</reference>
<sequence length="266" mass="31913">MNQYYFLSSFLSPQQPESPPLYLFQEINDLLSLNFTEQDWKSYVVLLRFFDLENFAFFWSGKPVPFSFGTVTNNNVETLLRLQMWSDEWEFEDFFKDFLLRYKTSQERLANFSELVRSFLDHYQSYPSEFLRTYFRFKQDLRIILAGFRARVMQKDVSFVLRDEDSSNPVVLHVLMQKDSPNYELPDEFFELKDVLGDYGRLPHMLNQTLSLYEFHKVEEMSRDKYFNADAILSRVTTYLMAIRNSYVSVQKGKELINLMEKGIKW</sequence>